<name>BIOB_BORA1</name>
<evidence type="ECO:0000255" key="1">
    <source>
        <dbReference type="HAMAP-Rule" id="MF_01694"/>
    </source>
</evidence>
<evidence type="ECO:0000255" key="2">
    <source>
        <dbReference type="PROSITE-ProRule" id="PRU01266"/>
    </source>
</evidence>
<comment type="function">
    <text evidence="1">Catalyzes the conversion of dethiobiotin (DTB) to biotin by the insertion of a sulfur atom into dethiobiotin via a radical-based mechanism.</text>
</comment>
<comment type="catalytic activity">
    <reaction evidence="1">
        <text>(4R,5S)-dethiobiotin + (sulfur carrier)-SH + 2 reduced [2Fe-2S]-[ferredoxin] + 2 S-adenosyl-L-methionine = (sulfur carrier)-H + biotin + 2 5'-deoxyadenosine + 2 L-methionine + 2 oxidized [2Fe-2S]-[ferredoxin]</text>
        <dbReference type="Rhea" id="RHEA:22060"/>
        <dbReference type="Rhea" id="RHEA-COMP:10000"/>
        <dbReference type="Rhea" id="RHEA-COMP:10001"/>
        <dbReference type="Rhea" id="RHEA-COMP:14737"/>
        <dbReference type="Rhea" id="RHEA-COMP:14739"/>
        <dbReference type="ChEBI" id="CHEBI:17319"/>
        <dbReference type="ChEBI" id="CHEBI:29917"/>
        <dbReference type="ChEBI" id="CHEBI:33737"/>
        <dbReference type="ChEBI" id="CHEBI:33738"/>
        <dbReference type="ChEBI" id="CHEBI:57586"/>
        <dbReference type="ChEBI" id="CHEBI:57844"/>
        <dbReference type="ChEBI" id="CHEBI:59789"/>
        <dbReference type="ChEBI" id="CHEBI:64428"/>
        <dbReference type="ChEBI" id="CHEBI:149473"/>
        <dbReference type="EC" id="2.8.1.6"/>
    </reaction>
</comment>
<comment type="cofactor">
    <cofactor evidence="1">
        <name>[4Fe-4S] cluster</name>
        <dbReference type="ChEBI" id="CHEBI:49883"/>
    </cofactor>
    <text evidence="1">Binds 1 [4Fe-4S] cluster. The cluster is coordinated with 3 cysteines and an exchangeable S-adenosyl-L-methionine.</text>
</comment>
<comment type="cofactor">
    <cofactor evidence="1">
        <name>[2Fe-2S] cluster</name>
        <dbReference type="ChEBI" id="CHEBI:190135"/>
    </cofactor>
    <text evidence="1">Binds 1 [2Fe-2S] cluster. The cluster is coordinated with 3 cysteines and 1 arginine.</text>
</comment>
<comment type="pathway">
    <text evidence="1">Cofactor biosynthesis; biotin biosynthesis; biotin from 7,8-diaminononanoate: step 2/2.</text>
</comment>
<comment type="subunit">
    <text evidence="1">Homodimer.</text>
</comment>
<comment type="similarity">
    <text evidence="1">Belongs to the radical SAM superfamily. Biotin synthase family.</text>
</comment>
<proteinExistence type="inferred from homology"/>
<reference key="1">
    <citation type="journal article" date="2006" name="J. Bacteriol.">
        <title>Comparison of the genome sequence of the poultry pathogen Bordetella avium with those of B. bronchiseptica, B. pertussis, and B. parapertussis reveals extensive diversity in surface structures associated with host interaction.</title>
        <authorList>
            <person name="Sebaihia M."/>
            <person name="Preston A."/>
            <person name="Maskell D.J."/>
            <person name="Kuzmiak H."/>
            <person name="Connell T.D."/>
            <person name="King N.D."/>
            <person name="Orndorff P.E."/>
            <person name="Miyamoto D.M."/>
            <person name="Thomson N.R."/>
            <person name="Harris D."/>
            <person name="Goble A."/>
            <person name="Lord A."/>
            <person name="Murphy L."/>
            <person name="Quail M.A."/>
            <person name="Rutter S."/>
            <person name="Squares R."/>
            <person name="Squares S."/>
            <person name="Woodward J."/>
            <person name="Parkhill J."/>
            <person name="Temple L.M."/>
        </authorList>
    </citation>
    <scope>NUCLEOTIDE SEQUENCE [LARGE SCALE GENOMIC DNA]</scope>
    <source>
        <strain>197N</strain>
    </source>
</reference>
<keyword id="KW-0001">2Fe-2S</keyword>
<keyword id="KW-0004">4Fe-4S</keyword>
<keyword id="KW-0093">Biotin biosynthesis</keyword>
<keyword id="KW-0408">Iron</keyword>
<keyword id="KW-0411">Iron-sulfur</keyword>
<keyword id="KW-0479">Metal-binding</keyword>
<keyword id="KW-1185">Reference proteome</keyword>
<keyword id="KW-0949">S-adenosyl-L-methionine</keyword>
<keyword id="KW-0808">Transferase</keyword>
<feature type="chain" id="PRO_0000381238" description="Biotin synthase">
    <location>
        <begin position="1"/>
        <end position="323"/>
    </location>
</feature>
<feature type="domain" description="Radical SAM core" evidence="2">
    <location>
        <begin position="46"/>
        <end position="264"/>
    </location>
</feature>
<feature type="binding site" evidence="1">
    <location>
        <position position="61"/>
    </location>
    <ligand>
        <name>[4Fe-4S] cluster</name>
        <dbReference type="ChEBI" id="CHEBI:49883"/>
        <note>4Fe-4S-S-AdoMet</note>
    </ligand>
</feature>
<feature type="binding site" evidence="1">
    <location>
        <position position="65"/>
    </location>
    <ligand>
        <name>[4Fe-4S] cluster</name>
        <dbReference type="ChEBI" id="CHEBI:49883"/>
        <note>4Fe-4S-S-AdoMet</note>
    </ligand>
</feature>
<feature type="binding site" evidence="1">
    <location>
        <position position="68"/>
    </location>
    <ligand>
        <name>[4Fe-4S] cluster</name>
        <dbReference type="ChEBI" id="CHEBI:49883"/>
        <note>4Fe-4S-S-AdoMet</note>
    </ligand>
</feature>
<feature type="binding site" evidence="1">
    <location>
        <position position="105"/>
    </location>
    <ligand>
        <name>[2Fe-2S] cluster</name>
        <dbReference type="ChEBI" id="CHEBI:190135"/>
    </ligand>
</feature>
<feature type="binding site" evidence="1">
    <location>
        <position position="136"/>
    </location>
    <ligand>
        <name>[2Fe-2S] cluster</name>
        <dbReference type="ChEBI" id="CHEBI:190135"/>
    </ligand>
</feature>
<feature type="binding site" evidence="1">
    <location>
        <position position="196"/>
    </location>
    <ligand>
        <name>[2Fe-2S] cluster</name>
        <dbReference type="ChEBI" id="CHEBI:190135"/>
    </ligand>
</feature>
<feature type="binding site" evidence="1">
    <location>
        <position position="268"/>
    </location>
    <ligand>
        <name>[2Fe-2S] cluster</name>
        <dbReference type="ChEBI" id="CHEBI:190135"/>
    </ligand>
</feature>
<dbReference type="EC" id="2.8.1.6" evidence="1"/>
<dbReference type="EMBL" id="AM167904">
    <property type="protein sequence ID" value="CAJ48442.1"/>
    <property type="molecule type" value="Genomic_DNA"/>
</dbReference>
<dbReference type="RefSeq" id="WP_012416523.1">
    <property type="nucleotide sequence ID" value="NC_010645.1"/>
</dbReference>
<dbReference type="SMR" id="Q2KWF1"/>
<dbReference type="STRING" id="360910.BAV0831"/>
<dbReference type="GeneID" id="92935988"/>
<dbReference type="KEGG" id="bav:BAV0831"/>
<dbReference type="eggNOG" id="COG0502">
    <property type="taxonomic scope" value="Bacteria"/>
</dbReference>
<dbReference type="HOGENOM" id="CLU_033172_1_2_4"/>
<dbReference type="OrthoDB" id="9786826at2"/>
<dbReference type="UniPathway" id="UPA00078">
    <property type="reaction ID" value="UER00162"/>
</dbReference>
<dbReference type="Proteomes" id="UP000001977">
    <property type="component" value="Chromosome"/>
</dbReference>
<dbReference type="GO" id="GO:0051537">
    <property type="term" value="F:2 iron, 2 sulfur cluster binding"/>
    <property type="evidence" value="ECO:0007669"/>
    <property type="project" value="UniProtKB-KW"/>
</dbReference>
<dbReference type="GO" id="GO:0051539">
    <property type="term" value="F:4 iron, 4 sulfur cluster binding"/>
    <property type="evidence" value="ECO:0007669"/>
    <property type="project" value="UniProtKB-KW"/>
</dbReference>
<dbReference type="GO" id="GO:0004076">
    <property type="term" value="F:biotin synthase activity"/>
    <property type="evidence" value="ECO:0007669"/>
    <property type="project" value="UniProtKB-UniRule"/>
</dbReference>
<dbReference type="GO" id="GO:0005506">
    <property type="term" value="F:iron ion binding"/>
    <property type="evidence" value="ECO:0007669"/>
    <property type="project" value="UniProtKB-UniRule"/>
</dbReference>
<dbReference type="GO" id="GO:0009102">
    <property type="term" value="P:biotin biosynthetic process"/>
    <property type="evidence" value="ECO:0007669"/>
    <property type="project" value="UniProtKB-UniRule"/>
</dbReference>
<dbReference type="CDD" id="cd01335">
    <property type="entry name" value="Radical_SAM"/>
    <property type="match status" value="1"/>
</dbReference>
<dbReference type="FunFam" id="3.20.20.70:FF:000011">
    <property type="entry name" value="Biotin synthase"/>
    <property type="match status" value="1"/>
</dbReference>
<dbReference type="Gene3D" id="3.20.20.70">
    <property type="entry name" value="Aldolase class I"/>
    <property type="match status" value="1"/>
</dbReference>
<dbReference type="HAMAP" id="MF_01694">
    <property type="entry name" value="BioB"/>
    <property type="match status" value="1"/>
</dbReference>
<dbReference type="InterPro" id="IPR013785">
    <property type="entry name" value="Aldolase_TIM"/>
</dbReference>
<dbReference type="InterPro" id="IPR010722">
    <property type="entry name" value="BATS_dom"/>
</dbReference>
<dbReference type="InterPro" id="IPR002684">
    <property type="entry name" value="Biotin_synth/BioAB"/>
</dbReference>
<dbReference type="InterPro" id="IPR024177">
    <property type="entry name" value="Biotin_synthase"/>
</dbReference>
<dbReference type="InterPro" id="IPR006638">
    <property type="entry name" value="Elp3/MiaA/NifB-like_rSAM"/>
</dbReference>
<dbReference type="InterPro" id="IPR007197">
    <property type="entry name" value="rSAM"/>
</dbReference>
<dbReference type="NCBIfam" id="TIGR00433">
    <property type="entry name" value="bioB"/>
    <property type="match status" value="1"/>
</dbReference>
<dbReference type="PANTHER" id="PTHR22976">
    <property type="entry name" value="BIOTIN SYNTHASE"/>
    <property type="match status" value="1"/>
</dbReference>
<dbReference type="PANTHER" id="PTHR22976:SF2">
    <property type="entry name" value="BIOTIN SYNTHASE, MITOCHONDRIAL"/>
    <property type="match status" value="1"/>
</dbReference>
<dbReference type="Pfam" id="PF06968">
    <property type="entry name" value="BATS"/>
    <property type="match status" value="1"/>
</dbReference>
<dbReference type="Pfam" id="PF04055">
    <property type="entry name" value="Radical_SAM"/>
    <property type="match status" value="1"/>
</dbReference>
<dbReference type="PIRSF" id="PIRSF001619">
    <property type="entry name" value="Biotin_synth"/>
    <property type="match status" value="1"/>
</dbReference>
<dbReference type="SFLD" id="SFLDF00272">
    <property type="entry name" value="biotin_synthase"/>
    <property type="match status" value="1"/>
</dbReference>
<dbReference type="SFLD" id="SFLDS00029">
    <property type="entry name" value="Radical_SAM"/>
    <property type="match status" value="1"/>
</dbReference>
<dbReference type="SMART" id="SM00876">
    <property type="entry name" value="BATS"/>
    <property type="match status" value="1"/>
</dbReference>
<dbReference type="SMART" id="SM00729">
    <property type="entry name" value="Elp3"/>
    <property type="match status" value="1"/>
</dbReference>
<dbReference type="SUPFAM" id="SSF102114">
    <property type="entry name" value="Radical SAM enzymes"/>
    <property type="match status" value="1"/>
</dbReference>
<dbReference type="PROSITE" id="PS51918">
    <property type="entry name" value="RADICAL_SAM"/>
    <property type="match status" value="1"/>
</dbReference>
<organism>
    <name type="scientific">Bordetella avium (strain 197N)</name>
    <dbReference type="NCBI Taxonomy" id="360910"/>
    <lineage>
        <taxon>Bacteria</taxon>
        <taxon>Pseudomonadati</taxon>
        <taxon>Pseudomonadota</taxon>
        <taxon>Betaproteobacteria</taxon>
        <taxon>Burkholderiales</taxon>
        <taxon>Alcaligenaceae</taxon>
        <taxon>Bordetella</taxon>
    </lineage>
</organism>
<gene>
    <name evidence="1" type="primary">bioB</name>
    <name type="ordered locus">BAV0831</name>
</gene>
<accession>Q2KWF1</accession>
<sequence>MQTIPLPIRPTAGRWRTADVVALYELPFPELLHRAQSVHREHFDATEIQLSSLLSIKTGGCPEDCGYCSQSARHDSGLAAEKLMPLDEVLAEARAAKNAGAQRFCMGAAWRSPKPHHLEAVAEMVREVKALGLETCVTLGMLQDGQAEQLKEAGLDYYNHNLDTSPEFYGNVVTTRGYQDRLDTLARVRNAGIHVCCGGIIGMGESRRDRASLIAQLANMEPYPESVPINHLVPIPGTPLAEAAPVDVFEFIRTIAVARITMPRAKVRLSAGRQSMSEAEQALCLLAGANSIFYGASLLTTGNPQVQADRALMSKLGMRPETV</sequence>
<protein>
    <recommendedName>
        <fullName evidence="1">Biotin synthase</fullName>
        <ecNumber evidence="1">2.8.1.6</ecNumber>
    </recommendedName>
</protein>